<gene>
    <name type="primary">PBN1</name>
    <name type="ordered locus">YALI0E17391g</name>
</gene>
<name>PBN1_YARLI</name>
<proteinExistence type="inferred from homology"/>
<feature type="chain" id="PRO_0000246309" description="Protein PBN1">
    <location>
        <begin position="1"/>
        <end position="523"/>
    </location>
</feature>
<feature type="topological domain" description="Lumenal" evidence="2">
    <location>
        <begin position="1"/>
        <end position="486"/>
    </location>
</feature>
<feature type="transmembrane region" description="Helical" evidence="2">
    <location>
        <begin position="487"/>
        <end position="504"/>
    </location>
</feature>
<feature type="topological domain" description="Cytoplasmic" evidence="2">
    <location>
        <begin position="505"/>
        <end position="523"/>
    </location>
</feature>
<feature type="glycosylation site" description="N-linked (GlcNAc...) asparagine" evidence="2">
    <location>
        <position position="26"/>
    </location>
</feature>
<feature type="glycosylation site" description="N-linked (GlcNAc...) asparagine" evidence="2">
    <location>
        <position position="387"/>
    </location>
</feature>
<evidence type="ECO:0000250" key="1"/>
<evidence type="ECO:0000255" key="2"/>
<evidence type="ECO:0000305" key="3"/>
<comment type="function">
    <text evidence="1">Required for proper folding and/or the stability of a subset of proteins in the endoplasmic reticulum. Component of glycosylphosphatidylinositol-mannosyltransferase 1 which transfers the first of the 4 mannoses in the GPI-anchor precursors during GPI-anchor biosynthesis. Probably acts by stabilizing the mannosyltransferase GPI14 (By similarity).</text>
</comment>
<comment type="pathway">
    <text>Glycolipid biosynthesis; glycosylphosphatidylinositol-anchor biosynthesis.</text>
</comment>
<comment type="subcellular location">
    <subcellularLocation>
        <location evidence="1">Endoplasmic reticulum membrane</location>
        <topology evidence="1">Single-pass type III membrane protein</topology>
    </subcellularLocation>
</comment>
<comment type="similarity">
    <text evidence="3">Belongs to the PIGX family.</text>
</comment>
<dbReference type="EMBL" id="CR382131">
    <property type="protein sequence ID" value="CAG79654.1"/>
    <property type="molecule type" value="Genomic_DNA"/>
</dbReference>
<dbReference type="RefSeq" id="XP_504061.1">
    <property type="nucleotide sequence ID" value="XM_504061.1"/>
</dbReference>
<dbReference type="STRING" id="284591.Q6C5K1"/>
<dbReference type="GlyCosmos" id="Q6C5K1">
    <property type="glycosylation" value="2 sites, No reported glycans"/>
</dbReference>
<dbReference type="EnsemblFungi" id="CAG79654">
    <property type="protein sequence ID" value="CAG79654"/>
    <property type="gene ID" value="YALI0_E17391g"/>
</dbReference>
<dbReference type="KEGG" id="yli:2911668"/>
<dbReference type="VEuPathDB" id="FungiDB:YALI0_E17391g"/>
<dbReference type="HOGENOM" id="CLU_030047_0_0_1"/>
<dbReference type="InParanoid" id="Q6C5K1"/>
<dbReference type="OMA" id="CINRIPS"/>
<dbReference type="OrthoDB" id="17770at4891"/>
<dbReference type="UniPathway" id="UPA00196"/>
<dbReference type="Proteomes" id="UP000001300">
    <property type="component" value="Chromosome E"/>
</dbReference>
<dbReference type="GO" id="GO:0005789">
    <property type="term" value="C:endoplasmic reticulum membrane"/>
    <property type="evidence" value="ECO:0007669"/>
    <property type="project" value="UniProtKB-SubCell"/>
</dbReference>
<dbReference type="GO" id="GO:1990529">
    <property type="term" value="C:glycosylphosphatidylinositol-mannosyltransferase I complex"/>
    <property type="evidence" value="ECO:0000318"/>
    <property type="project" value="GO_Central"/>
</dbReference>
<dbReference type="GO" id="GO:0006506">
    <property type="term" value="P:GPI anchor biosynthetic process"/>
    <property type="evidence" value="ECO:0000318"/>
    <property type="project" value="GO_Central"/>
</dbReference>
<dbReference type="InterPro" id="IPR042322">
    <property type="entry name" value="Pbn1"/>
</dbReference>
<dbReference type="InterPro" id="IPR013233">
    <property type="entry name" value="PIG-X/PBN1"/>
</dbReference>
<dbReference type="PANTHER" id="PTHR28533">
    <property type="entry name" value="PROTEIN PBN1"/>
    <property type="match status" value="1"/>
</dbReference>
<dbReference type="PANTHER" id="PTHR28533:SF1">
    <property type="entry name" value="PROTEIN PBN1"/>
    <property type="match status" value="1"/>
</dbReference>
<dbReference type="Pfam" id="PF08320">
    <property type="entry name" value="PIG-X"/>
    <property type="match status" value="1"/>
</dbReference>
<dbReference type="SMART" id="SM00780">
    <property type="entry name" value="PIG-X"/>
    <property type="match status" value="1"/>
</dbReference>
<keyword id="KW-0256">Endoplasmic reticulum</keyword>
<keyword id="KW-0325">Glycoprotein</keyword>
<keyword id="KW-0337">GPI-anchor biosynthesis</keyword>
<keyword id="KW-0472">Membrane</keyword>
<keyword id="KW-1185">Reference proteome</keyword>
<keyword id="KW-0812">Transmembrane</keyword>
<keyword id="KW-1133">Transmembrane helix</keyword>
<reference key="1">
    <citation type="journal article" date="2004" name="Nature">
        <title>Genome evolution in yeasts.</title>
        <authorList>
            <person name="Dujon B."/>
            <person name="Sherman D."/>
            <person name="Fischer G."/>
            <person name="Durrens P."/>
            <person name="Casaregola S."/>
            <person name="Lafontaine I."/>
            <person name="de Montigny J."/>
            <person name="Marck C."/>
            <person name="Neuveglise C."/>
            <person name="Talla E."/>
            <person name="Goffard N."/>
            <person name="Frangeul L."/>
            <person name="Aigle M."/>
            <person name="Anthouard V."/>
            <person name="Babour A."/>
            <person name="Barbe V."/>
            <person name="Barnay S."/>
            <person name="Blanchin S."/>
            <person name="Beckerich J.-M."/>
            <person name="Beyne E."/>
            <person name="Bleykasten C."/>
            <person name="Boisrame A."/>
            <person name="Boyer J."/>
            <person name="Cattolico L."/>
            <person name="Confanioleri F."/>
            <person name="de Daruvar A."/>
            <person name="Despons L."/>
            <person name="Fabre E."/>
            <person name="Fairhead C."/>
            <person name="Ferry-Dumazet H."/>
            <person name="Groppi A."/>
            <person name="Hantraye F."/>
            <person name="Hennequin C."/>
            <person name="Jauniaux N."/>
            <person name="Joyet P."/>
            <person name="Kachouri R."/>
            <person name="Kerrest A."/>
            <person name="Koszul R."/>
            <person name="Lemaire M."/>
            <person name="Lesur I."/>
            <person name="Ma L."/>
            <person name="Muller H."/>
            <person name="Nicaud J.-M."/>
            <person name="Nikolski M."/>
            <person name="Oztas S."/>
            <person name="Ozier-Kalogeropoulos O."/>
            <person name="Pellenz S."/>
            <person name="Potier S."/>
            <person name="Richard G.-F."/>
            <person name="Straub M.-L."/>
            <person name="Suleau A."/>
            <person name="Swennen D."/>
            <person name="Tekaia F."/>
            <person name="Wesolowski-Louvel M."/>
            <person name="Westhof E."/>
            <person name="Wirth B."/>
            <person name="Zeniou-Meyer M."/>
            <person name="Zivanovic Y."/>
            <person name="Bolotin-Fukuhara M."/>
            <person name="Thierry A."/>
            <person name="Bouchier C."/>
            <person name="Caudron B."/>
            <person name="Scarpelli C."/>
            <person name="Gaillardin C."/>
            <person name="Weissenbach J."/>
            <person name="Wincker P."/>
            <person name="Souciet J.-L."/>
        </authorList>
    </citation>
    <scope>NUCLEOTIDE SEQUENCE [LARGE SCALE GENOMIC DNA]</scope>
    <source>
        <strain>CLIB 122 / E 150</strain>
    </source>
</reference>
<sequence length="523" mass="59010">MRRRATILADLQQHGDKISFKPGDNNKSKLTVSVNAPRQDRFSAPVSNADLDVLNHVADVSVAWGRPSAAQQPVLFAAAYEPGLHVTVVKKQASEPRKWGEEKPSEAAPELVHVAKFLEEQLGLPVDPKTFIESRSDYTYYDPLVGPEAFGHFVDKHSACSDESEEFVNDLDTFNYAQSASFHIDHDKKELVTEVTIPDLEHYFNQKKQHISRACKNDRLEVGIFDLNNLATSYAFRGVAELKGLLHDSTKEKPQETFLVIEPRHNIGAGSVSVDFERPVGLHPKSELKLRHIAIPTDHNDENDGVKHCRLFAKYSAPSSIFFDKYQLADLERTTSEHPNGQGRLLALWGEADLEEPRYHTEGWGSEALVEIFPITDAPEGTPFNLNFTLPLHLRYEEPKEGETYEPNEAPWPLVFWVCAETDEQLANFKQSPFDVTHNSYMRLFPEGVSYHHIGPREANGRGFPLLSTSWGTPVADIDRFAAVRDYTSIMMVAGFLMVTIAILRKVFRGKAMSEELKEKKEQ</sequence>
<accession>Q6C5K1</accession>
<organism>
    <name type="scientific">Yarrowia lipolytica (strain CLIB 122 / E 150)</name>
    <name type="common">Yeast</name>
    <name type="synonym">Candida lipolytica</name>
    <dbReference type="NCBI Taxonomy" id="284591"/>
    <lineage>
        <taxon>Eukaryota</taxon>
        <taxon>Fungi</taxon>
        <taxon>Dikarya</taxon>
        <taxon>Ascomycota</taxon>
        <taxon>Saccharomycotina</taxon>
        <taxon>Dipodascomycetes</taxon>
        <taxon>Dipodascales</taxon>
        <taxon>Dipodascales incertae sedis</taxon>
        <taxon>Yarrowia</taxon>
    </lineage>
</organism>
<protein>
    <recommendedName>
        <fullName>Protein PBN1</fullName>
    </recommendedName>
</protein>